<accession>S4WUL1</accession>
<gene>
    <name evidence="5" type="primary">SPL15</name>
    <name evidence="8" type="ordered locus">AALP_Aa5g233200</name>
</gene>
<evidence type="ECO:0000255" key="1"/>
<evidence type="ECO:0000255" key="2">
    <source>
        <dbReference type="PROSITE-ProRule" id="PRU00470"/>
    </source>
</evidence>
<evidence type="ECO:0000256" key="3">
    <source>
        <dbReference type="SAM" id="MobiDB-lite"/>
    </source>
</evidence>
<evidence type="ECO:0000269" key="4">
    <source>
    </source>
</evidence>
<evidence type="ECO:0000303" key="5">
    <source>
    </source>
</evidence>
<evidence type="ECO:0000303" key="6">
    <source>
    </source>
</evidence>
<evidence type="ECO:0000305" key="7"/>
<evidence type="ECO:0000312" key="8">
    <source>
        <dbReference type="EMBL" id="KFK35084.1"/>
    </source>
</evidence>
<keyword id="KW-0238">DNA-binding</keyword>
<keyword id="KW-0287">Flowering</keyword>
<keyword id="KW-0479">Metal-binding</keyword>
<keyword id="KW-0539">Nucleus</keyword>
<keyword id="KW-1185">Reference proteome</keyword>
<keyword id="KW-0804">Transcription</keyword>
<keyword id="KW-0805">Transcription regulation</keyword>
<keyword id="KW-0862">Zinc</keyword>
<keyword id="KW-0863">Zinc-finger</keyword>
<feature type="chain" id="PRO_0000447442" description="Squamosa promoter-binding protein-like 15">
    <location>
        <begin position="1"/>
        <end position="355"/>
    </location>
</feature>
<feature type="zinc finger region" description="SBP-type" evidence="2">
    <location>
        <begin position="61"/>
        <end position="138"/>
    </location>
</feature>
<feature type="region of interest" description="Disordered" evidence="3">
    <location>
        <begin position="1"/>
        <end position="27"/>
    </location>
</feature>
<feature type="short sequence motif" description="Bipartite nuclear localization signal" evidence="1">
    <location>
        <begin position="121"/>
        <end position="137"/>
    </location>
</feature>
<feature type="compositionally biased region" description="Low complexity" evidence="3">
    <location>
        <begin position="12"/>
        <end position="27"/>
    </location>
</feature>
<feature type="binding site" evidence="2">
    <location>
        <position position="64"/>
    </location>
    <ligand>
        <name>Zn(2+)</name>
        <dbReference type="ChEBI" id="CHEBI:29105"/>
        <label>1</label>
    </ligand>
</feature>
<feature type="binding site" evidence="2">
    <location>
        <position position="69"/>
    </location>
    <ligand>
        <name>Zn(2+)</name>
        <dbReference type="ChEBI" id="CHEBI:29105"/>
        <label>1</label>
    </ligand>
</feature>
<feature type="binding site" evidence="2">
    <location>
        <position position="86"/>
    </location>
    <ligand>
        <name>Zn(2+)</name>
        <dbReference type="ChEBI" id="CHEBI:29105"/>
        <label>1</label>
    </ligand>
</feature>
<feature type="binding site" evidence="2">
    <location>
        <position position="89"/>
    </location>
    <ligand>
        <name>Zn(2+)</name>
        <dbReference type="ChEBI" id="CHEBI:29105"/>
        <label>1</label>
    </ligand>
</feature>
<feature type="binding site" evidence="2">
    <location>
        <position position="105"/>
    </location>
    <ligand>
        <name>Zn(2+)</name>
        <dbReference type="ChEBI" id="CHEBI:29105"/>
        <label>2</label>
    </ligand>
</feature>
<feature type="binding site" evidence="2">
    <location>
        <position position="108"/>
    </location>
    <ligand>
        <name>Zn(2+)</name>
        <dbReference type="ChEBI" id="CHEBI:29105"/>
        <label>2</label>
    </ligand>
</feature>
<feature type="binding site" evidence="2">
    <location>
        <position position="112"/>
    </location>
    <ligand>
        <name>Zn(2+)</name>
        <dbReference type="ChEBI" id="CHEBI:29105"/>
        <label>2</label>
    </ligand>
</feature>
<feature type="binding site" evidence="2">
    <location>
        <position position="124"/>
    </location>
    <ligand>
        <name>Zn(2+)</name>
        <dbReference type="ChEBI" id="CHEBI:29105"/>
        <label>2</label>
    </ligand>
</feature>
<reference key="1">
    <citation type="journal article" date="2013" name="Science">
        <title>Mechanisms of age-dependent response to winter temperature in perennial flowering of Arabis alpina.</title>
        <authorList>
            <person name="Bergonzi S."/>
            <person name="Albani M.C."/>
            <person name="Ver Loren van Themaat E."/>
            <person name="Nordstrom K.J."/>
            <person name="Wang R."/>
            <person name="Schneeberger K."/>
            <person name="Moerland P.D."/>
            <person name="Coupland G."/>
        </authorList>
    </citation>
    <scope>NUCLEOTIDE SEQUENCE [GENOMIC DNA]</scope>
</reference>
<reference key="2">
    <citation type="journal article" date="2015" name="Nat. Plants">
        <title>Genome expansion of Arabis alpina linked with retrotransposition and reduced symmetric DNA methylation.</title>
        <authorList>
            <person name="Willing E.M."/>
            <person name="Rawat V."/>
            <person name="Mandakova T."/>
            <person name="Maumus F."/>
            <person name="James G.V."/>
            <person name="Nordstroem K.J."/>
            <person name="Becker C."/>
            <person name="Warthmann N."/>
            <person name="Chica C."/>
            <person name="Szarzynska B."/>
            <person name="Zytnicki M."/>
            <person name="Albani M.C."/>
            <person name="Kiefer C."/>
            <person name="Bergonzi S."/>
            <person name="Castaings L."/>
            <person name="Mateos J.L."/>
            <person name="Berns M.C."/>
            <person name="Bujdoso N."/>
            <person name="Piofczyk T."/>
            <person name="de Lorenzo L."/>
            <person name="Barrero-Sicilia C."/>
            <person name="Mateos I."/>
            <person name="Piednoel M."/>
            <person name="Hagmann J."/>
            <person name="Chen-Min-Tao R."/>
            <person name="Iglesias-Fernandez R."/>
            <person name="Schuster S.C."/>
            <person name="Alonso-Blanco C."/>
            <person name="Roudier F."/>
            <person name="Carbonero P."/>
            <person name="Paz-Ares J."/>
            <person name="Davis S.J."/>
            <person name="Pecinka A."/>
            <person name="Quesneville H."/>
            <person name="Colot V."/>
            <person name="Lysak M.A."/>
            <person name="Weigel D."/>
            <person name="Coupland G."/>
            <person name="Schneeberger K."/>
        </authorList>
    </citation>
    <scope>NUCLEOTIDE SEQUENCE [LARGE SCALE GENOMIC DNA]</scope>
    <source>
        <strain>cv. Pajares</strain>
    </source>
</reference>
<reference key="3">
    <citation type="journal article" date="2019" name="Science">
        <title>A regulatory circuit conferring varied flowering response to cold in annual and perennial plants.</title>
        <authorList>
            <person name="Hyun Y."/>
            <person name="Vincent C."/>
            <person name="Tilmes V."/>
            <person name="Bergonzi S."/>
            <person name="Kiefer C."/>
            <person name="Richter R."/>
            <person name="Martinez-Gallegos R."/>
            <person name="Severing E."/>
            <person name="Coupland G."/>
        </authorList>
    </citation>
    <scope>FUNCTION</scope>
    <scope>INDUCTION</scope>
    <scope>DISRUPTION PHENOTYPE</scope>
</reference>
<organism>
    <name type="scientific">Arabis alpina</name>
    <name type="common">Alpine rock-cress</name>
    <dbReference type="NCBI Taxonomy" id="50452"/>
    <lineage>
        <taxon>Eukaryota</taxon>
        <taxon>Viridiplantae</taxon>
        <taxon>Streptophyta</taxon>
        <taxon>Embryophyta</taxon>
        <taxon>Tracheophyta</taxon>
        <taxon>Spermatophyta</taxon>
        <taxon>Magnoliopsida</taxon>
        <taxon>eudicotyledons</taxon>
        <taxon>Gunneridae</taxon>
        <taxon>Pentapetalae</taxon>
        <taxon>rosids</taxon>
        <taxon>malvids</taxon>
        <taxon>Brassicales</taxon>
        <taxon>Brassicaceae</taxon>
        <taxon>Arabideae</taxon>
        <taxon>Arabis</taxon>
    </lineage>
</organism>
<proteinExistence type="evidence at transcript level"/>
<sequence>MELLKGSGLNQTESGGSSSTESSSLSGGLRFGQKIYFEDGSGSGSGSSKNRVHNTGRKSLTARCQVEGCRMDLTNAKSYYSRHKVCCIHSKSSKVIVSGLPQRFCQQCSRFHLLSEFDLEKRSCRRRLACHNERRRKPQATTSLLSSRYARTAPSLYGNANSAMIRSVLGDPTAWATARSAMRWSGPERESHQVMNVFSSHGSSSFTTTCPEMMMNNNGTDSSCALSLLSNTNPNQQLQQHQLQTPTNVWRPSSGFNPVIADRVTMAQPPPVSIHNQYLNNQTWEFTTGEKSNLQYMSPVLGPSQISQPADFQISNGSTMGGFELSHHQQVLRQYMEPENTRAYDSSPQHFNWSL</sequence>
<comment type="function">
    <text evidence="4">Probable transcription factor required for the flowering response to vernalization in the shoot apical meristem (SAM) (PubMed:30679374). Defines the competence of shoot meristems to flower in response to vernalization in perennials (PubMed:30679374).</text>
</comment>
<comment type="subcellular location">
    <subcellularLocation>
        <location evidence="7">Nucleus</location>
    </subcellularLocation>
</comment>
<comment type="induction">
    <text evidence="4">Induced in the shoot apical meristem (SAM) during vernalization.</text>
</comment>
<comment type="domain">
    <text evidence="7">The SBP-type zinc finger is required for the binding to DNA.</text>
</comment>
<comment type="disruption phenotype">
    <text evidence="4">Spl15 mutant plants fail to flower after vernalization.</text>
</comment>
<name>SPL15_ARAAL</name>
<dbReference type="EMBL" id="KC815962">
    <property type="protein sequence ID" value="AGP03038.1"/>
    <property type="molecule type" value="Genomic_DNA"/>
</dbReference>
<dbReference type="EMBL" id="CM002873">
    <property type="protein sequence ID" value="KFK35084.1"/>
    <property type="molecule type" value="Genomic_DNA"/>
</dbReference>
<dbReference type="SMR" id="S4WUL1"/>
<dbReference type="EnsemblPlants" id="KFK35084">
    <property type="protein sequence ID" value="KFK35084"/>
    <property type="gene ID" value="AALP_AA5G233200"/>
</dbReference>
<dbReference type="Gramene" id="KFK35084">
    <property type="protein sequence ID" value="KFK35084"/>
    <property type="gene ID" value="AALP_AA5G233200"/>
</dbReference>
<dbReference type="eggNOG" id="ENOG502QPVZ">
    <property type="taxonomic scope" value="Eukaryota"/>
</dbReference>
<dbReference type="OMA" id="YMEPENT"/>
<dbReference type="OrthoDB" id="514967at2759"/>
<dbReference type="Proteomes" id="UP000029120">
    <property type="component" value="Chromosome 5"/>
</dbReference>
<dbReference type="GO" id="GO:0005634">
    <property type="term" value="C:nucleus"/>
    <property type="evidence" value="ECO:0007669"/>
    <property type="project" value="UniProtKB-SubCell"/>
</dbReference>
<dbReference type="GO" id="GO:0003677">
    <property type="term" value="F:DNA binding"/>
    <property type="evidence" value="ECO:0007669"/>
    <property type="project" value="UniProtKB-KW"/>
</dbReference>
<dbReference type="GO" id="GO:0008270">
    <property type="term" value="F:zinc ion binding"/>
    <property type="evidence" value="ECO:0007669"/>
    <property type="project" value="UniProtKB-KW"/>
</dbReference>
<dbReference type="GO" id="GO:0048653">
    <property type="term" value="P:anther development"/>
    <property type="evidence" value="ECO:0007669"/>
    <property type="project" value="EnsemblPlants"/>
</dbReference>
<dbReference type="GO" id="GO:0010220">
    <property type="term" value="P:positive regulation of vernalization response"/>
    <property type="evidence" value="ECO:0000315"/>
    <property type="project" value="UniProtKB"/>
</dbReference>
<dbReference type="GO" id="GO:0042127">
    <property type="term" value="P:regulation of cell population proliferation"/>
    <property type="evidence" value="ECO:0007669"/>
    <property type="project" value="EnsemblPlants"/>
</dbReference>
<dbReference type="GO" id="GO:0008361">
    <property type="term" value="P:regulation of cell size"/>
    <property type="evidence" value="ECO:0007669"/>
    <property type="project" value="EnsemblPlants"/>
</dbReference>
<dbReference type="FunFam" id="4.10.1100.10:FF:000001">
    <property type="entry name" value="Squamosa promoter-binding-like protein 14"/>
    <property type="match status" value="1"/>
</dbReference>
<dbReference type="Gene3D" id="4.10.1100.10">
    <property type="entry name" value="Transcription factor, SBP-box domain"/>
    <property type="match status" value="1"/>
</dbReference>
<dbReference type="InterPro" id="IPR044817">
    <property type="entry name" value="SBP-like"/>
</dbReference>
<dbReference type="InterPro" id="IPR004333">
    <property type="entry name" value="SBP_dom"/>
</dbReference>
<dbReference type="InterPro" id="IPR036893">
    <property type="entry name" value="SBP_sf"/>
</dbReference>
<dbReference type="PANTHER" id="PTHR31251:SF98">
    <property type="entry name" value="SQUAMOSA PROMOTER-BINDING-LIKE PROTEIN 15"/>
    <property type="match status" value="1"/>
</dbReference>
<dbReference type="PANTHER" id="PTHR31251">
    <property type="entry name" value="SQUAMOSA PROMOTER-BINDING-LIKE PROTEIN 4"/>
    <property type="match status" value="1"/>
</dbReference>
<dbReference type="Pfam" id="PF03110">
    <property type="entry name" value="SBP"/>
    <property type="match status" value="1"/>
</dbReference>
<dbReference type="SUPFAM" id="SSF103612">
    <property type="entry name" value="SBT domain"/>
    <property type="match status" value="1"/>
</dbReference>
<dbReference type="PROSITE" id="PS51141">
    <property type="entry name" value="ZF_SBP"/>
    <property type="match status" value="1"/>
</dbReference>
<protein>
    <recommendedName>
        <fullName evidence="6">Squamosa promoter-binding protein-like 15</fullName>
        <shortName evidence="6">AaSPL15</shortName>
    </recommendedName>
</protein>